<evidence type="ECO:0000255" key="1">
    <source>
        <dbReference type="HAMAP-Rule" id="MF_01356"/>
    </source>
</evidence>
<gene>
    <name evidence="1" type="primary">nuoB</name>
    <name type="ordered locus">Gbem_3925</name>
</gene>
<proteinExistence type="inferred from homology"/>
<protein>
    <recommendedName>
        <fullName evidence="1">NADH-quinone oxidoreductase subunit B</fullName>
        <ecNumber evidence="1">7.1.1.-</ecNumber>
    </recommendedName>
    <alternativeName>
        <fullName evidence="1">NADH dehydrogenase I subunit B</fullName>
    </alternativeName>
    <alternativeName>
        <fullName evidence="1">NDH-1 subunit B</fullName>
    </alternativeName>
</protein>
<sequence>MGVDQPLGENIITTSLDSLVNWARKSSIWPMTFGLACCAIEMMATGAAKHDLDRFGIIFRASPRQADCIIIAGTVTKKMLPVIKTVYEQMPEPKWVVAMGACACSGGVFDTYSVVQGIDEALPVDVYIPGCPPRPEALLYGLLKLQDKIANERNSFGSSIGLGERLEPAA</sequence>
<dbReference type="EC" id="7.1.1.-" evidence="1"/>
<dbReference type="EMBL" id="CP001124">
    <property type="protein sequence ID" value="ACH40917.1"/>
    <property type="molecule type" value="Genomic_DNA"/>
</dbReference>
<dbReference type="RefSeq" id="WP_012532351.1">
    <property type="nucleotide sequence ID" value="NC_011146.1"/>
</dbReference>
<dbReference type="SMR" id="B5EFG2"/>
<dbReference type="STRING" id="404380.Gbem_3925"/>
<dbReference type="KEGG" id="gbm:Gbem_3925"/>
<dbReference type="eggNOG" id="COG0377">
    <property type="taxonomic scope" value="Bacteria"/>
</dbReference>
<dbReference type="HOGENOM" id="CLU_055737_7_3_7"/>
<dbReference type="OrthoDB" id="9786737at2"/>
<dbReference type="Proteomes" id="UP000008825">
    <property type="component" value="Chromosome"/>
</dbReference>
<dbReference type="GO" id="GO:0005886">
    <property type="term" value="C:plasma membrane"/>
    <property type="evidence" value="ECO:0007669"/>
    <property type="project" value="UniProtKB-SubCell"/>
</dbReference>
<dbReference type="GO" id="GO:0045271">
    <property type="term" value="C:respiratory chain complex I"/>
    <property type="evidence" value="ECO:0007669"/>
    <property type="project" value="TreeGrafter"/>
</dbReference>
<dbReference type="GO" id="GO:0051539">
    <property type="term" value="F:4 iron, 4 sulfur cluster binding"/>
    <property type="evidence" value="ECO:0007669"/>
    <property type="project" value="UniProtKB-KW"/>
</dbReference>
<dbReference type="GO" id="GO:0005506">
    <property type="term" value="F:iron ion binding"/>
    <property type="evidence" value="ECO:0007669"/>
    <property type="project" value="UniProtKB-UniRule"/>
</dbReference>
<dbReference type="GO" id="GO:0008137">
    <property type="term" value="F:NADH dehydrogenase (ubiquinone) activity"/>
    <property type="evidence" value="ECO:0007669"/>
    <property type="project" value="InterPro"/>
</dbReference>
<dbReference type="GO" id="GO:0050136">
    <property type="term" value="F:NADH:ubiquinone reductase (non-electrogenic) activity"/>
    <property type="evidence" value="ECO:0007669"/>
    <property type="project" value="UniProtKB-UniRule"/>
</dbReference>
<dbReference type="GO" id="GO:0048038">
    <property type="term" value="F:quinone binding"/>
    <property type="evidence" value="ECO:0007669"/>
    <property type="project" value="UniProtKB-KW"/>
</dbReference>
<dbReference type="GO" id="GO:0009060">
    <property type="term" value="P:aerobic respiration"/>
    <property type="evidence" value="ECO:0007669"/>
    <property type="project" value="TreeGrafter"/>
</dbReference>
<dbReference type="GO" id="GO:0015990">
    <property type="term" value="P:electron transport coupled proton transport"/>
    <property type="evidence" value="ECO:0007669"/>
    <property type="project" value="TreeGrafter"/>
</dbReference>
<dbReference type="FunFam" id="3.40.50.12280:FF:000002">
    <property type="entry name" value="NADH-quinone oxidoreductase subunit B"/>
    <property type="match status" value="1"/>
</dbReference>
<dbReference type="Gene3D" id="3.40.50.12280">
    <property type="match status" value="1"/>
</dbReference>
<dbReference type="HAMAP" id="MF_01356">
    <property type="entry name" value="NDH1_NuoB"/>
    <property type="match status" value="1"/>
</dbReference>
<dbReference type="InterPro" id="IPR006137">
    <property type="entry name" value="NADH_UbQ_OxRdtase-like_20kDa"/>
</dbReference>
<dbReference type="InterPro" id="IPR006138">
    <property type="entry name" value="NADH_UQ_OxRdtase_20Kd_su"/>
</dbReference>
<dbReference type="NCBIfam" id="TIGR01957">
    <property type="entry name" value="nuoB_fam"/>
    <property type="match status" value="1"/>
</dbReference>
<dbReference type="NCBIfam" id="NF005012">
    <property type="entry name" value="PRK06411.1"/>
    <property type="match status" value="1"/>
</dbReference>
<dbReference type="PANTHER" id="PTHR11995">
    <property type="entry name" value="NADH DEHYDROGENASE"/>
    <property type="match status" value="1"/>
</dbReference>
<dbReference type="PANTHER" id="PTHR11995:SF14">
    <property type="entry name" value="NADH DEHYDROGENASE [UBIQUINONE] IRON-SULFUR PROTEIN 7, MITOCHONDRIAL"/>
    <property type="match status" value="1"/>
</dbReference>
<dbReference type="Pfam" id="PF01058">
    <property type="entry name" value="Oxidored_q6"/>
    <property type="match status" value="1"/>
</dbReference>
<dbReference type="SUPFAM" id="SSF56770">
    <property type="entry name" value="HydA/Nqo6-like"/>
    <property type="match status" value="1"/>
</dbReference>
<reference key="1">
    <citation type="submission" date="2008-07" db="EMBL/GenBank/DDBJ databases">
        <title>Complete sequence of Geobacter bemidjiensis BEM.</title>
        <authorList>
            <consortium name="US DOE Joint Genome Institute"/>
            <person name="Lucas S."/>
            <person name="Copeland A."/>
            <person name="Lapidus A."/>
            <person name="Glavina del Rio T."/>
            <person name="Dalin E."/>
            <person name="Tice H."/>
            <person name="Bruce D."/>
            <person name="Goodwin L."/>
            <person name="Pitluck S."/>
            <person name="Kiss H."/>
            <person name="Brettin T."/>
            <person name="Detter J.C."/>
            <person name="Han C."/>
            <person name="Kuske C.R."/>
            <person name="Schmutz J."/>
            <person name="Larimer F."/>
            <person name="Land M."/>
            <person name="Hauser L."/>
            <person name="Kyrpides N."/>
            <person name="Lykidis A."/>
            <person name="Lovley D."/>
            <person name="Richardson P."/>
        </authorList>
    </citation>
    <scope>NUCLEOTIDE SEQUENCE [LARGE SCALE GENOMIC DNA]</scope>
    <source>
        <strain>ATCC BAA-1014 / DSM 16622 / JCM 12645 / Bem</strain>
    </source>
</reference>
<keyword id="KW-0004">4Fe-4S</keyword>
<keyword id="KW-0997">Cell inner membrane</keyword>
<keyword id="KW-1003">Cell membrane</keyword>
<keyword id="KW-0408">Iron</keyword>
<keyword id="KW-0411">Iron-sulfur</keyword>
<keyword id="KW-0472">Membrane</keyword>
<keyword id="KW-0479">Metal-binding</keyword>
<keyword id="KW-0520">NAD</keyword>
<keyword id="KW-0874">Quinone</keyword>
<keyword id="KW-1185">Reference proteome</keyword>
<keyword id="KW-1278">Translocase</keyword>
<keyword id="KW-0813">Transport</keyword>
<keyword id="KW-0830">Ubiquinone</keyword>
<organism>
    <name type="scientific">Citrifermentans bemidjiense (strain ATCC BAA-1014 / DSM 16622 / JCM 12645 / Bem)</name>
    <name type="common">Geobacter bemidjiensis</name>
    <dbReference type="NCBI Taxonomy" id="404380"/>
    <lineage>
        <taxon>Bacteria</taxon>
        <taxon>Pseudomonadati</taxon>
        <taxon>Thermodesulfobacteriota</taxon>
        <taxon>Desulfuromonadia</taxon>
        <taxon>Geobacterales</taxon>
        <taxon>Geobacteraceae</taxon>
        <taxon>Citrifermentans</taxon>
    </lineage>
</organism>
<name>NUOB_CITBB</name>
<accession>B5EFG2</accession>
<comment type="function">
    <text evidence="1">NDH-1 shuttles electrons from NADH, via FMN and iron-sulfur (Fe-S) centers, to quinones in the respiratory chain. The immediate electron acceptor for the enzyme in this species is believed to be ubiquinone. Couples the redox reaction to proton translocation (for every two electrons transferred, four hydrogen ions are translocated across the cytoplasmic membrane), and thus conserves the redox energy in a proton gradient.</text>
</comment>
<comment type="catalytic activity">
    <reaction evidence="1">
        <text>a quinone + NADH + 5 H(+)(in) = a quinol + NAD(+) + 4 H(+)(out)</text>
        <dbReference type="Rhea" id="RHEA:57888"/>
        <dbReference type="ChEBI" id="CHEBI:15378"/>
        <dbReference type="ChEBI" id="CHEBI:24646"/>
        <dbReference type="ChEBI" id="CHEBI:57540"/>
        <dbReference type="ChEBI" id="CHEBI:57945"/>
        <dbReference type="ChEBI" id="CHEBI:132124"/>
    </reaction>
</comment>
<comment type="cofactor">
    <cofactor evidence="1">
        <name>[4Fe-4S] cluster</name>
        <dbReference type="ChEBI" id="CHEBI:49883"/>
    </cofactor>
    <text evidence="1">Binds 1 [4Fe-4S] cluster.</text>
</comment>
<comment type="subunit">
    <text evidence="1">NDH-1 is composed of 14 different subunits. Subunits NuoB, C, D, E, F, and G constitute the peripheral sector of the complex.</text>
</comment>
<comment type="subcellular location">
    <subcellularLocation>
        <location evidence="1">Cell inner membrane</location>
        <topology evidence="1">Peripheral membrane protein</topology>
        <orientation evidence="1">Cytoplasmic side</orientation>
    </subcellularLocation>
</comment>
<comment type="similarity">
    <text evidence="1">Belongs to the complex I 20 kDa subunit family.</text>
</comment>
<feature type="chain" id="PRO_0000376238" description="NADH-quinone oxidoreductase subunit B">
    <location>
        <begin position="1"/>
        <end position="170"/>
    </location>
</feature>
<feature type="binding site" evidence="1">
    <location>
        <position position="37"/>
    </location>
    <ligand>
        <name>[4Fe-4S] cluster</name>
        <dbReference type="ChEBI" id="CHEBI:49883"/>
    </ligand>
</feature>
<feature type="binding site" evidence="1">
    <location>
        <position position="38"/>
    </location>
    <ligand>
        <name>[4Fe-4S] cluster</name>
        <dbReference type="ChEBI" id="CHEBI:49883"/>
    </ligand>
</feature>
<feature type="binding site" evidence="1">
    <location>
        <position position="102"/>
    </location>
    <ligand>
        <name>[4Fe-4S] cluster</name>
        <dbReference type="ChEBI" id="CHEBI:49883"/>
    </ligand>
</feature>
<feature type="binding site" evidence="1">
    <location>
        <position position="131"/>
    </location>
    <ligand>
        <name>[4Fe-4S] cluster</name>
        <dbReference type="ChEBI" id="CHEBI:49883"/>
    </ligand>
</feature>